<accession>B5R3L7</accession>
<evidence type="ECO:0000255" key="1">
    <source>
        <dbReference type="HAMAP-Rule" id="MF_00612"/>
    </source>
</evidence>
<sequence>MSQPCPCGSADEYSLCCGRIVSGERVAPDPSHLMRSRYCAFVMKDADYLIKSWHPTCNAAAFRDDIIAGFANTRWLGLTIFEHTWSEAENTGYVSFIARFSEQGKTGAIIERSRFIKENGQWYYIDGTRPQLGRNDPCPCGSGKKFKKCCGQ</sequence>
<proteinExistence type="inferred from homology"/>
<name>YCHJ_SALEP</name>
<comment type="similarity">
    <text evidence="1">Belongs to the UPF0225 family.</text>
</comment>
<dbReference type="EMBL" id="AM933172">
    <property type="protein sequence ID" value="CAR32859.1"/>
    <property type="molecule type" value="Genomic_DNA"/>
</dbReference>
<dbReference type="RefSeq" id="WP_001540172.1">
    <property type="nucleotide sequence ID" value="NC_011294.1"/>
</dbReference>
<dbReference type="SMR" id="B5R3L7"/>
<dbReference type="KEGG" id="set:SEN1281"/>
<dbReference type="HOGENOM" id="CLU_099590_0_0_6"/>
<dbReference type="Proteomes" id="UP000000613">
    <property type="component" value="Chromosome"/>
</dbReference>
<dbReference type="Gene3D" id="3.10.450.50">
    <property type="match status" value="1"/>
</dbReference>
<dbReference type="HAMAP" id="MF_00612">
    <property type="entry name" value="UPF0225"/>
    <property type="match status" value="1"/>
</dbReference>
<dbReference type="InterPro" id="IPR032710">
    <property type="entry name" value="NTF2-like_dom_sf"/>
</dbReference>
<dbReference type="InterPro" id="IPR004027">
    <property type="entry name" value="SEC_C_motif"/>
</dbReference>
<dbReference type="InterPro" id="IPR023006">
    <property type="entry name" value="UPF0225"/>
</dbReference>
<dbReference type="InterPro" id="IPR048469">
    <property type="entry name" value="YchJ-like_M"/>
</dbReference>
<dbReference type="NCBIfam" id="NF002449">
    <property type="entry name" value="PRK01617.1"/>
    <property type="match status" value="1"/>
</dbReference>
<dbReference type="NCBIfam" id="NF002486">
    <property type="entry name" value="PRK01752.1"/>
    <property type="match status" value="1"/>
</dbReference>
<dbReference type="PANTHER" id="PTHR33747:SF1">
    <property type="entry name" value="ADENYLATE CYCLASE-ASSOCIATED CAP C-TERMINAL DOMAIN-CONTAINING PROTEIN"/>
    <property type="match status" value="1"/>
</dbReference>
<dbReference type="PANTHER" id="PTHR33747">
    <property type="entry name" value="UPF0225 PROTEIN SCO1677"/>
    <property type="match status" value="1"/>
</dbReference>
<dbReference type="Pfam" id="PF02810">
    <property type="entry name" value="SEC-C"/>
    <property type="match status" value="2"/>
</dbReference>
<dbReference type="Pfam" id="PF17775">
    <property type="entry name" value="YchJ_M-like"/>
    <property type="match status" value="1"/>
</dbReference>
<dbReference type="SUPFAM" id="SSF54427">
    <property type="entry name" value="NTF2-like"/>
    <property type="match status" value="1"/>
</dbReference>
<dbReference type="SUPFAM" id="SSF103642">
    <property type="entry name" value="Sec-C motif"/>
    <property type="match status" value="1"/>
</dbReference>
<feature type="chain" id="PRO_1000130392" description="UPF0225 protein YchJ">
    <location>
        <begin position="1"/>
        <end position="152"/>
    </location>
</feature>
<protein>
    <recommendedName>
        <fullName evidence="1">UPF0225 protein YchJ</fullName>
    </recommendedName>
</protein>
<gene>
    <name evidence="1" type="primary">ychJ</name>
    <name type="ordered locus">SEN1281</name>
</gene>
<organism>
    <name type="scientific">Salmonella enteritidis PT4 (strain P125109)</name>
    <dbReference type="NCBI Taxonomy" id="550537"/>
    <lineage>
        <taxon>Bacteria</taxon>
        <taxon>Pseudomonadati</taxon>
        <taxon>Pseudomonadota</taxon>
        <taxon>Gammaproteobacteria</taxon>
        <taxon>Enterobacterales</taxon>
        <taxon>Enterobacteriaceae</taxon>
        <taxon>Salmonella</taxon>
    </lineage>
</organism>
<reference key="1">
    <citation type="journal article" date="2008" name="Genome Res.">
        <title>Comparative genome analysis of Salmonella enteritidis PT4 and Salmonella gallinarum 287/91 provides insights into evolutionary and host adaptation pathways.</title>
        <authorList>
            <person name="Thomson N.R."/>
            <person name="Clayton D.J."/>
            <person name="Windhorst D."/>
            <person name="Vernikos G."/>
            <person name="Davidson S."/>
            <person name="Churcher C."/>
            <person name="Quail M.A."/>
            <person name="Stevens M."/>
            <person name="Jones M.A."/>
            <person name="Watson M."/>
            <person name="Barron A."/>
            <person name="Layton A."/>
            <person name="Pickard D."/>
            <person name="Kingsley R.A."/>
            <person name="Bignell A."/>
            <person name="Clark L."/>
            <person name="Harris B."/>
            <person name="Ormond D."/>
            <person name="Abdellah Z."/>
            <person name="Brooks K."/>
            <person name="Cherevach I."/>
            <person name="Chillingworth T."/>
            <person name="Woodward J."/>
            <person name="Norberczak H."/>
            <person name="Lord A."/>
            <person name="Arrowsmith C."/>
            <person name="Jagels K."/>
            <person name="Moule S."/>
            <person name="Mungall K."/>
            <person name="Saunders M."/>
            <person name="Whitehead S."/>
            <person name="Chabalgoity J.A."/>
            <person name="Maskell D."/>
            <person name="Humphreys T."/>
            <person name="Roberts M."/>
            <person name="Barrow P.A."/>
            <person name="Dougan G."/>
            <person name="Parkhill J."/>
        </authorList>
    </citation>
    <scope>NUCLEOTIDE SEQUENCE [LARGE SCALE GENOMIC DNA]</scope>
    <source>
        <strain>P125109</strain>
    </source>
</reference>